<sequence length="630" mass="72782">EFESTILGPSVPDLVALTNEALSISITQKKSIIDTTTIRYALHRKTWDLEADRNLSPAKEHGTLFYQVGRAFAHTVLLRNCSIDPISIYIKKNLCEAGDSSLYKWYFELGTSMKKLTILLYLLTCSAGSIAQDLLSPPGPDEQNLITSYGLVENDSDLVHGLSDIVHGLLELEGALVGSSPTEEEVEGTEEEVEGTEEEVEGTEEEVEGTEEEVEGTEDEEVEGTEEEVEGTEEEVEGTEEEVEGTEEEVEGTEEEVEGTEDEEVEGTEEEVEGTEEEVEGTEEEVEGTEEEVEGTEEEVEGTEEEVEGTEEEVEGTEKDSSQFDNDRVTLLLRPKPRNPLDIQRLIYQHQKYESELEEDDDDDEDVFAPQKMLEDLFSELVWSPRIWHPWDFLLDCEAEIPAEEIPEEEDELPEDALETEVAVWGVEEEGEADDEEDVLLEAQQEDELLEEEDEELDEEEDELDEEEEEPKEEEDELHEEEEEEEEEEEEEDELQENDSEFFRVKPIIPRHRWIFRKKKDVFEVLSYPEEATEISKELLRLLNPKTKRDAPKRPRQRWWTKKKQDKHYELLLDRQRWLITKRSLSKSNGFFRSNTPSESYQYLSNLFLSNRRLLDQMTKTFFRKMAFPG</sequence>
<gene>
    <name type="primary">ycf2</name>
</gene>
<proteinExistence type="inferred from homology"/>
<keyword id="KW-0067">ATP-binding</keyword>
<keyword id="KW-0150">Chloroplast</keyword>
<keyword id="KW-0547">Nucleotide-binding</keyword>
<keyword id="KW-0934">Plastid</keyword>
<comment type="function">
    <text>Probable ATPase of unknown function. Its presence in a non-photosynthetic plant (Epifagus virginiana) and experiments in tobacco indicate that it has an essential function which is probably not related to photosynthesis.</text>
</comment>
<comment type="subcellular location">
    <subcellularLocation>
        <location evidence="1">Plastid</location>
        <location evidence="1">Chloroplast stroma</location>
    </subcellularLocation>
</comment>
<comment type="similarity">
    <text evidence="4">Belongs to the Ycf2 family.</text>
</comment>
<organism>
    <name type="scientific">Oenothera villaricae</name>
    <name type="common">Evening primrose</name>
    <dbReference type="NCBI Taxonomy" id="3941"/>
    <lineage>
        <taxon>Eukaryota</taxon>
        <taxon>Viridiplantae</taxon>
        <taxon>Streptophyta</taxon>
        <taxon>Embryophyta</taxon>
        <taxon>Tracheophyta</taxon>
        <taxon>Spermatophyta</taxon>
        <taxon>Magnoliopsida</taxon>
        <taxon>eudicotyledons</taxon>
        <taxon>Gunneridae</taxon>
        <taxon>Pentapetalae</taxon>
        <taxon>rosids</taxon>
        <taxon>malvids</taxon>
        <taxon>Myrtales</taxon>
        <taxon>Onagraceae</taxon>
        <taxon>Onagroideae</taxon>
        <taxon>Onagreae</taxon>
        <taxon>Oenothera</taxon>
    </lineage>
</organism>
<protein>
    <recommendedName>
        <fullName>Protein Ycf2</fullName>
    </recommendedName>
</protein>
<evidence type="ECO:0000250" key="1"/>
<evidence type="ECO:0000255" key="2"/>
<evidence type="ECO:0000256" key="3">
    <source>
        <dbReference type="SAM" id="MobiDB-lite"/>
    </source>
</evidence>
<evidence type="ECO:0000305" key="4"/>
<dbReference type="EMBL" id="X64615">
    <property type="protein sequence ID" value="CAA45896.1"/>
    <property type="molecule type" value="Genomic_DNA"/>
</dbReference>
<dbReference type="PIR" id="S29796">
    <property type="entry name" value="S29796"/>
</dbReference>
<dbReference type="GO" id="GO:0009570">
    <property type="term" value="C:chloroplast stroma"/>
    <property type="evidence" value="ECO:0007669"/>
    <property type="project" value="UniProtKB-SubCell"/>
</dbReference>
<dbReference type="GO" id="GO:0005524">
    <property type="term" value="F:ATP binding"/>
    <property type="evidence" value="ECO:0007669"/>
    <property type="project" value="UniProtKB-KW"/>
</dbReference>
<dbReference type="Gene3D" id="2.150.10.10">
    <property type="entry name" value="Serralysin-like metalloprotease, C-terminal"/>
    <property type="match status" value="1"/>
</dbReference>
<dbReference type="InterPro" id="IPR011049">
    <property type="entry name" value="Serralysin-like_metalloprot_C"/>
</dbReference>
<dbReference type="PANTHER" id="PTHR33078:SF92">
    <property type="entry name" value="PROTEIN YCF2"/>
    <property type="match status" value="1"/>
</dbReference>
<dbReference type="PANTHER" id="PTHR33078">
    <property type="entry name" value="PROTEIN YCF2-RELATED"/>
    <property type="match status" value="1"/>
</dbReference>
<dbReference type="SUPFAM" id="SSF57997">
    <property type="entry name" value="Tropomyosin"/>
    <property type="match status" value="1"/>
</dbReference>
<accession>P31569</accession>
<reference key="1">
    <citation type="journal article" date="1993" name="Curr. Genet.">
        <title>In-frame length mutations associated with short tandem repeats are located in unassigned open reading frames of Oenothera chloroplast DNA.</title>
        <authorList>
            <person name="Nimzyk R."/>
            <person name="Schoendorf T."/>
            <person name="Hachtel W."/>
        </authorList>
    </citation>
    <scope>NUCLEOTIDE SEQUENCE [GENOMIC DNA]</scope>
</reference>
<feature type="chain" id="PRO_0000223062" description="Protein Ycf2">
    <location>
        <begin position="1" status="less than"/>
        <end position="630"/>
    </location>
</feature>
<feature type="region of interest" description="Disordered" evidence="3">
    <location>
        <begin position="176"/>
        <end position="335"/>
    </location>
</feature>
<feature type="region of interest" description="Disordered" evidence="3">
    <location>
        <begin position="403"/>
        <end position="501"/>
    </location>
</feature>
<feature type="compositionally biased region" description="Acidic residues" evidence="3">
    <location>
        <begin position="182"/>
        <end position="315"/>
    </location>
</feature>
<feature type="compositionally biased region" description="Basic and acidic residues" evidence="3">
    <location>
        <begin position="316"/>
        <end position="328"/>
    </location>
</feature>
<feature type="compositionally biased region" description="Acidic residues" evidence="3">
    <location>
        <begin position="403"/>
        <end position="419"/>
    </location>
</feature>
<feature type="compositionally biased region" description="Acidic residues" evidence="3">
    <location>
        <begin position="427"/>
        <end position="500"/>
    </location>
</feature>
<feature type="binding site" evidence="2">
    <location>
        <begin position="174"/>
        <end position="181"/>
    </location>
    <ligand>
        <name>ATP</name>
        <dbReference type="ChEBI" id="CHEBI:30616"/>
    </ligand>
</feature>
<feature type="non-terminal residue">
    <location>
        <position position="1"/>
    </location>
</feature>
<geneLocation type="chloroplast"/>
<name>YCF2_OENVI</name>